<protein>
    <recommendedName>
        <fullName>Uncharacterized protein L294</fullName>
    </recommendedName>
</protein>
<evidence type="ECO:0000269" key="1">
    <source>
    </source>
</evidence>
<dbReference type="EMBL" id="AY653733">
    <property type="protein sequence ID" value="AAV50566.1"/>
    <property type="molecule type" value="Genomic_DNA"/>
</dbReference>
<dbReference type="SMR" id="Q5UPY0"/>
<dbReference type="KEGG" id="vg:9924909"/>
<dbReference type="Proteomes" id="UP000001134">
    <property type="component" value="Genome"/>
</dbReference>
<dbReference type="GO" id="GO:0044423">
    <property type="term" value="C:virion component"/>
    <property type="evidence" value="ECO:0007669"/>
    <property type="project" value="UniProtKB-KW"/>
</dbReference>
<dbReference type="GO" id="GO:0005524">
    <property type="term" value="F:ATP binding"/>
    <property type="evidence" value="ECO:0007669"/>
    <property type="project" value="UniProtKB-KW"/>
</dbReference>
<dbReference type="InterPro" id="IPR027417">
    <property type="entry name" value="P-loop_NTPase"/>
</dbReference>
<dbReference type="SUPFAM" id="SSF52540">
    <property type="entry name" value="P-loop containing nucleoside triphosphate hydrolases"/>
    <property type="match status" value="1"/>
</dbReference>
<organism>
    <name type="scientific">Acanthamoeba polyphaga mimivirus</name>
    <name type="common">APMV</name>
    <dbReference type="NCBI Taxonomy" id="212035"/>
    <lineage>
        <taxon>Viruses</taxon>
        <taxon>Varidnaviria</taxon>
        <taxon>Bamfordvirae</taxon>
        <taxon>Nucleocytoviricota</taxon>
        <taxon>Megaviricetes</taxon>
        <taxon>Imitervirales</taxon>
        <taxon>Mimiviridae</taxon>
        <taxon>Megamimivirinae</taxon>
        <taxon>Mimivirus</taxon>
        <taxon>Mimivirus bradfordmassiliense</taxon>
    </lineage>
</organism>
<proteinExistence type="evidence at protein level"/>
<feature type="chain" id="PRO_0000253238" description="Uncharacterized protein L294">
    <location>
        <begin position="1"/>
        <end position="2959"/>
    </location>
</feature>
<accession>Q5UPY0</accession>
<keyword id="KW-0067">ATP-binding</keyword>
<keyword id="KW-0505">Motor protein</keyword>
<keyword id="KW-0547">Nucleotide-binding</keyword>
<keyword id="KW-1185">Reference proteome</keyword>
<keyword id="KW-0946">Virion</keyword>
<comment type="subcellular location">
    <subcellularLocation>
        <location evidence="1">Virion</location>
    </subcellularLocation>
</comment>
<gene>
    <name type="ordered locus">MIMI_L294</name>
</gene>
<organismHost>
    <name type="scientific">Acanthamoeba polyphaga</name>
    <name type="common">Amoeba</name>
    <dbReference type="NCBI Taxonomy" id="5757"/>
</organismHost>
<reference key="1">
    <citation type="journal article" date="2004" name="Science">
        <title>The 1.2-megabase genome sequence of Mimivirus.</title>
        <authorList>
            <person name="Raoult D."/>
            <person name="Audic S."/>
            <person name="Robert C."/>
            <person name="Abergel C."/>
            <person name="Renesto P."/>
            <person name="Ogata H."/>
            <person name="La Scola B."/>
            <person name="Susan M."/>
            <person name="Claverie J.-M."/>
        </authorList>
    </citation>
    <scope>NUCLEOTIDE SEQUENCE [GENOMIC DNA]</scope>
    <source>
        <strain>Rowbotham-Bradford</strain>
    </source>
</reference>
<reference key="2">
    <citation type="journal article" date="2006" name="J. Virol.">
        <title>Mimivirus giant particles incorporate a large fraction of anonymous and unique gene products.</title>
        <authorList>
            <person name="Renesto P."/>
            <person name="Abergel C."/>
            <person name="Decloquement P."/>
            <person name="Moinier D."/>
            <person name="Azza S."/>
            <person name="Ogata H."/>
            <person name="Fourquet P."/>
            <person name="Gorvel J.-P."/>
            <person name="Claverie J.-M."/>
            <person name="Raoult D."/>
        </authorList>
    </citation>
    <scope>IDENTIFICATION BY MASS SPECTROMETRY [LARGE SCALE ANALYSIS]</scope>
    <scope>SUBCELLULAR LOCATION</scope>
</reference>
<name>YL294_MIMIV</name>
<sequence>MNIAYKYIGYIYTTIMSNKITVNKDYTQATLNPSNTVDIGPRISNYQADYLFIHFDEIMRREIDRNPDIIYDNNFQEFMQYVSEYKRILVESRKHKLVPGLFGSTSEQFSCSTGSHIFTPEDRDKINEAIILGQLNPRKYLTENDLSLIGFNNHYIQECGNRLSHNFFEHVALPTQRVWNNYLLSKSIEPNASITINTYQKLHEDFQKSMADINDQVINGDYATRYNIIEQKISDTVNFLENLISASNTEENIINNTLDLSNYYERLVFGEPNVDPSLVIPKDTIDLVERDALKKQIKASINRYSKMSTSSVLASTYNVASEVQNIRNVGSLATNLLDTLNNANNIINPPQELYDLMSTKLYIDDNGNQVAKYLNDTASNKLIQNEIDKQNSYLEFIRTNETITSRGKLIPVNSANDPLSRLNRYSHKYTYVPIAQGGNNSKSTKYQFNKKSTQNITISQSGGRDIDVEKLLDSSKQASNVINQTISDIDQSRNFYTKQTELYFNNNNFVDIDNLNQRNQLLIEMINVLGIYNFLIGERSNNRSVFLSELDKRTKSFKQILDNYIKSVNSRIPPITDDKTIGQILANGFLSVSEIQNLITTSGLNINVEQIPEDAILNNATTAKLISTLIDKYSLSNMKSVVSDLRKILNVAPLGITYQTNPEDSYKQLSSFYSILKSLNTSLLSEYQNLSTNTQNFQSIRDLTGKILESNISTFNTFTKQLIESVRNFGSEIDGIQSIRKQILQSKRRLADIEFFTRESTYNLSPKSQSVSQQDADLLQSKNLGVAVMNHDLSSNEITDFYQNYVTNYLDKIAGASVNVVKHYSYDKDIKTINDNKNMFNNTYDNYNTLLETLQTSANTTRTLRNIVSNNTTINSDASFNSLARRIWDVINYFNGTFMPLNSDIMNKINIPGDLSEYLSKYLIVNPEIINNYLANSVNFDSTGKIQPTDKLSRKSQIDLLVKTIPFYIKGAQLSDTYTTSQYSPGIPNQTFIGEVQDRLNQLIANETDDNAYNLYNYVTTSRNIILPEARIVGEISDQLEDVYNSRFSTPTNRSEFQNSILSQLDTIIIGIYRQFYETLMYLYQLANNYILINNPHNPMYSSIQKDQHNLAALQQDIRIMNLSNNFAVNGRDIPDIVPKSTGGPINCRNPLINKRFNKTIHRRINCLGLMIIDYNNNIGSDLSTITQQYNTFYQNSVPLLNLLRDQTISGEQINAILDVNINALNLFVANPKLLPNSFTYGTRIQESNMITPNIINTFDINNLDPNKSVFNDYETTLSAYIPSFVNDIIDINGQYIEYTNVRYHLISVGSISLPNVKIQAGDTISIRNIDDIQMLIDIGNNVVDFTNRLYKSSKQISNLVVETVDTWGSSVLTDSDEFNLRRSKKFRLLQTLNTLRHIEDSIRSNRNITRLNQFLLEKEDPTNAVLIMSAISIVNNINLTDRLFNENVDKIWIFARKLVNVWYTIFSQILSLLVVNGVVPATTNLIRSLDPFMRRSNLFNIDNVIDNTPNTNNYVDAINNEFNTKISQINNDKNKYPINLDPSKSTGIPDQDKYIIDNPNIISFNHYYNNISDKSSRVYILMAIMNDEGYRNINKYLESISDHTEYLINLVDFSENYLDNNFIQKKLDDLPIIDPKITNLVNAQTNFKQAFMLELQLELQALGLDQLYGPIESLVNNGTNTIQTGLSNPKTITPVAILDPNRSIEIDNQVSLDIISSPRIFDPSEYLYLANEFITSRQSGRFFRLYLSDIYRVIFRSITNELDRTMNSINQDISATNVADLEEFRETYLNYITNKKFSTTLYLNPTDLSDSITAVPNDSNSPNIKAVLLLPNDYQTNSDRINTINDIFRTVSETIKPNIYELFETEISNYNKLIQADYTVRKLITDYKSDVQNKLDKLRNIRNVISQVMFDNYFKQYAFISNGNLMTLLENTIENYETIWQLIEQKIYSIVNKNNYHILTMSQINNYQAFKSAINKLINNQAIIKKFYKRMSFGLIEYYYDIMDSLVVCLESKNFEDMSDIEAYIYQYHYVQLKRCHALFRWIRQEYQRNKQAQDDVNSRNITPGTKYNRILDYKIELLKTTGDVNSVFLEFQGLRRYLDEYSAIAMDKVQLHLRINDFVSNSYNNELNTLSNGRDISYMLDTDPNSNEYKNRWDNKQLMFINQGNSNNLKINFDLLQKIYQFNNPSSPPRDFEAYYTATYRRMKNNQGIDFQRIYNTNVFPESDVISNYMSIAPNILNNKGTVIMTYGYSGVGKSASLFGRKMDLSRGVDKPSNGILQATLDQLTNVEIYFRVFEIYGLGTQYNYYWNPTENNNYQCYPDFYQCIIHHVLDTTDSTTLKTKDHLVFTNRHDMLAYIMDLQNPKNGTQFTINNKNDPNLSNKTTFFNTIGQMVKSTYSKITEDHYRNFTDFVDDIDRVRSDGIHIKKVFDHIVKQIKGTINNPISSRSILVYDFEINLDPGSSNPIFIPFLIYDLPGKEDISRTYVDTSITPAIQGSSIEKINLRRRVFKDIDPPSTTPGVHNKERKSTYVLNPLLIPVFDNNIQIITDILGEISSKNTMISRLDVNFEATIVTDILNFVVDNFGVDNKGENVPSVQYPMNSFYKNPGGITTLVQLLSDNELIDTYKSTRYADVLPLIIGKGILSVNIIAGNRTYNPNENIKEIKILIGVVIIGHLIKYRLFDVVVEIINRIVEGPGNPNQNDDGGWSVSKIYAFFEAYYINENVVGLLQYLITNVLNKSSNSSGILEQVSTINNNNIKDTISQSYRTANAYSIIKSQLRIYPKTPLPDDYNIKVNSNLLVSSDVLKTLEIKEFMDNNDIQPDGQFFTPKVTPITELARRMDNVISFENRSDYDNNRIFRSGSSNFNCYDSNDVNDKILINPRRAIFNTAPSTMTETNRPLLQDFIEPYEQKISFYYIFYVVSNSQSRNKAEEQVKLLNNSMPFIDKMDPVSKKKQCV</sequence>